<reference key="1">
    <citation type="submission" date="2008-04" db="EMBL/GenBank/DDBJ databases">
        <title>Complete sequence of chromosome 1 of Burkholderia ambifaria MC40-6.</title>
        <authorList>
            <person name="Copeland A."/>
            <person name="Lucas S."/>
            <person name="Lapidus A."/>
            <person name="Glavina del Rio T."/>
            <person name="Dalin E."/>
            <person name="Tice H."/>
            <person name="Pitluck S."/>
            <person name="Chain P."/>
            <person name="Malfatti S."/>
            <person name="Shin M."/>
            <person name="Vergez L."/>
            <person name="Lang D."/>
            <person name="Schmutz J."/>
            <person name="Larimer F."/>
            <person name="Land M."/>
            <person name="Hauser L."/>
            <person name="Kyrpides N."/>
            <person name="Lykidis A."/>
            <person name="Ramette A."/>
            <person name="Konstantinidis K."/>
            <person name="Tiedje J."/>
            <person name="Richardson P."/>
        </authorList>
    </citation>
    <scope>NUCLEOTIDE SEQUENCE [LARGE SCALE GENOMIC DNA]</scope>
    <source>
        <strain>MC40-6</strain>
    </source>
</reference>
<accession>B1YRB8</accession>
<sequence>MAKKIVGFIKLQIPAGKANPSPPVGPALGQRGLNIMEFCKAFNAQTQGMEPGLPVPVVITAFADKSFTFVMKTPPATVLIKKAAKVDKGSSKPHTDKVGSITRAQAEEIAKTKMPDLTAADLDAAVRTIAGSARSMGITVEGV</sequence>
<dbReference type="EMBL" id="CP001025">
    <property type="protein sequence ID" value="ACB62765.1"/>
    <property type="molecule type" value="Genomic_DNA"/>
</dbReference>
<dbReference type="RefSeq" id="WP_006753591.1">
    <property type="nucleotide sequence ID" value="NC_010551.1"/>
</dbReference>
<dbReference type="SMR" id="B1YRB8"/>
<dbReference type="GeneID" id="93171029"/>
<dbReference type="KEGG" id="bac:BamMC406_0264"/>
<dbReference type="HOGENOM" id="CLU_074237_2_0_4"/>
<dbReference type="OrthoDB" id="9802408at2"/>
<dbReference type="Proteomes" id="UP000001680">
    <property type="component" value="Chromosome 1"/>
</dbReference>
<dbReference type="GO" id="GO:0022625">
    <property type="term" value="C:cytosolic large ribosomal subunit"/>
    <property type="evidence" value="ECO:0007669"/>
    <property type="project" value="TreeGrafter"/>
</dbReference>
<dbReference type="GO" id="GO:0070180">
    <property type="term" value="F:large ribosomal subunit rRNA binding"/>
    <property type="evidence" value="ECO:0007669"/>
    <property type="project" value="UniProtKB-UniRule"/>
</dbReference>
<dbReference type="GO" id="GO:0003735">
    <property type="term" value="F:structural constituent of ribosome"/>
    <property type="evidence" value="ECO:0007669"/>
    <property type="project" value="InterPro"/>
</dbReference>
<dbReference type="GO" id="GO:0006412">
    <property type="term" value="P:translation"/>
    <property type="evidence" value="ECO:0007669"/>
    <property type="project" value="UniProtKB-UniRule"/>
</dbReference>
<dbReference type="CDD" id="cd00349">
    <property type="entry name" value="Ribosomal_L11"/>
    <property type="match status" value="1"/>
</dbReference>
<dbReference type="FunFam" id="1.10.10.250:FF:000001">
    <property type="entry name" value="50S ribosomal protein L11"/>
    <property type="match status" value="1"/>
</dbReference>
<dbReference type="FunFam" id="3.30.1550.10:FF:000001">
    <property type="entry name" value="50S ribosomal protein L11"/>
    <property type="match status" value="1"/>
</dbReference>
<dbReference type="Gene3D" id="1.10.10.250">
    <property type="entry name" value="Ribosomal protein L11, C-terminal domain"/>
    <property type="match status" value="1"/>
</dbReference>
<dbReference type="Gene3D" id="3.30.1550.10">
    <property type="entry name" value="Ribosomal protein L11/L12, N-terminal domain"/>
    <property type="match status" value="1"/>
</dbReference>
<dbReference type="HAMAP" id="MF_00736">
    <property type="entry name" value="Ribosomal_uL11"/>
    <property type="match status" value="1"/>
</dbReference>
<dbReference type="InterPro" id="IPR000911">
    <property type="entry name" value="Ribosomal_uL11"/>
</dbReference>
<dbReference type="InterPro" id="IPR006519">
    <property type="entry name" value="Ribosomal_uL11_bac-typ"/>
</dbReference>
<dbReference type="InterPro" id="IPR020783">
    <property type="entry name" value="Ribosomal_uL11_C"/>
</dbReference>
<dbReference type="InterPro" id="IPR036769">
    <property type="entry name" value="Ribosomal_uL11_C_sf"/>
</dbReference>
<dbReference type="InterPro" id="IPR020785">
    <property type="entry name" value="Ribosomal_uL11_CS"/>
</dbReference>
<dbReference type="InterPro" id="IPR020784">
    <property type="entry name" value="Ribosomal_uL11_N"/>
</dbReference>
<dbReference type="InterPro" id="IPR036796">
    <property type="entry name" value="Ribosomal_uL11_N_sf"/>
</dbReference>
<dbReference type="NCBIfam" id="TIGR01632">
    <property type="entry name" value="L11_bact"/>
    <property type="match status" value="1"/>
</dbReference>
<dbReference type="PANTHER" id="PTHR11661">
    <property type="entry name" value="60S RIBOSOMAL PROTEIN L12"/>
    <property type="match status" value="1"/>
</dbReference>
<dbReference type="PANTHER" id="PTHR11661:SF1">
    <property type="entry name" value="LARGE RIBOSOMAL SUBUNIT PROTEIN UL11M"/>
    <property type="match status" value="1"/>
</dbReference>
<dbReference type="Pfam" id="PF00298">
    <property type="entry name" value="Ribosomal_L11"/>
    <property type="match status" value="1"/>
</dbReference>
<dbReference type="Pfam" id="PF03946">
    <property type="entry name" value="Ribosomal_L11_N"/>
    <property type="match status" value="1"/>
</dbReference>
<dbReference type="SMART" id="SM00649">
    <property type="entry name" value="RL11"/>
    <property type="match status" value="1"/>
</dbReference>
<dbReference type="SUPFAM" id="SSF54747">
    <property type="entry name" value="Ribosomal L11/L12e N-terminal domain"/>
    <property type="match status" value="1"/>
</dbReference>
<dbReference type="SUPFAM" id="SSF46906">
    <property type="entry name" value="Ribosomal protein L11, C-terminal domain"/>
    <property type="match status" value="1"/>
</dbReference>
<dbReference type="PROSITE" id="PS00359">
    <property type="entry name" value="RIBOSOMAL_L11"/>
    <property type="match status" value="1"/>
</dbReference>
<proteinExistence type="inferred from homology"/>
<evidence type="ECO:0000255" key="1">
    <source>
        <dbReference type="HAMAP-Rule" id="MF_00736"/>
    </source>
</evidence>
<evidence type="ECO:0000305" key="2"/>
<protein>
    <recommendedName>
        <fullName evidence="1">Large ribosomal subunit protein uL11</fullName>
    </recommendedName>
    <alternativeName>
        <fullName evidence="2">50S ribosomal protein L11</fullName>
    </alternativeName>
</protein>
<name>RL11_BURA4</name>
<comment type="function">
    <text evidence="1">Forms part of the ribosomal stalk which helps the ribosome interact with GTP-bound translation factors.</text>
</comment>
<comment type="subunit">
    <text evidence="1">Part of the ribosomal stalk of the 50S ribosomal subunit. Interacts with L10 and the large rRNA to form the base of the stalk. L10 forms an elongated spine to which L12 dimers bind in a sequential fashion forming a multimeric L10(L12)X complex.</text>
</comment>
<comment type="PTM">
    <text evidence="1">One or more lysine residues are methylated.</text>
</comment>
<comment type="similarity">
    <text evidence="1">Belongs to the universal ribosomal protein uL11 family.</text>
</comment>
<gene>
    <name evidence="1" type="primary">rplK</name>
    <name type="ordered locus">BamMC406_0264</name>
</gene>
<feature type="chain" id="PRO_1000132871" description="Large ribosomal subunit protein uL11">
    <location>
        <begin position="1"/>
        <end position="143"/>
    </location>
</feature>
<keyword id="KW-0488">Methylation</keyword>
<keyword id="KW-0687">Ribonucleoprotein</keyword>
<keyword id="KW-0689">Ribosomal protein</keyword>
<keyword id="KW-0694">RNA-binding</keyword>
<keyword id="KW-0699">rRNA-binding</keyword>
<organism>
    <name type="scientific">Burkholderia ambifaria (strain MC40-6)</name>
    <dbReference type="NCBI Taxonomy" id="398577"/>
    <lineage>
        <taxon>Bacteria</taxon>
        <taxon>Pseudomonadati</taxon>
        <taxon>Pseudomonadota</taxon>
        <taxon>Betaproteobacteria</taxon>
        <taxon>Burkholderiales</taxon>
        <taxon>Burkholderiaceae</taxon>
        <taxon>Burkholderia</taxon>
        <taxon>Burkholderia cepacia complex</taxon>
    </lineage>
</organism>